<keyword id="KW-0002">3D-structure</keyword>
<keyword id="KW-0089">Bile pigment</keyword>
<keyword id="KW-0150">Chloroplast</keyword>
<keyword id="KW-0157">Chromophore</keyword>
<keyword id="KW-0249">Electron transport</keyword>
<keyword id="KW-0472">Membrane</keyword>
<keyword id="KW-0602">Photosynthesis</keyword>
<keyword id="KW-0934">Plastid</keyword>
<keyword id="KW-0793">Thylakoid</keyword>
<keyword id="KW-0813">Transport</keyword>
<dbReference type="EMBL" id="KF314695">
    <property type="protein sequence ID" value="AGY96992.1"/>
    <property type="molecule type" value="mRNA"/>
</dbReference>
<dbReference type="PDB" id="4LMS">
    <property type="method" value="X-ray"/>
    <property type="resolution" value="1.35 A"/>
    <property type="chains" value="C=53-122"/>
</dbReference>
<dbReference type="PDBsum" id="4LMS"/>
<dbReference type="SMR" id="U5T8W5"/>
<dbReference type="EvolutionaryTrace" id="U5T8W5"/>
<dbReference type="GO" id="GO:0009535">
    <property type="term" value="C:chloroplast thylakoid membrane"/>
    <property type="evidence" value="ECO:0007669"/>
    <property type="project" value="UniProtKB-SubCell"/>
</dbReference>
<dbReference type="GO" id="GO:0030089">
    <property type="term" value="C:phycobilisome"/>
    <property type="evidence" value="ECO:0007669"/>
    <property type="project" value="InterPro"/>
</dbReference>
<dbReference type="GO" id="GO:0015979">
    <property type="term" value="P:photosynthesis"/>
    <property type="evidence" value="ECO:0007669"/>
    <property type="project" value="UniProtKB-KW"/>
</dbReference>
<dbReference type="Gene3D" id="3.90.510.10">
    <property type="entry name" value="Phycoerythrin alpha chain"/>
    <property type="match status" value="1"/>
</dbReference>
<dbReference type="InterPro" id="IPR011070">
    <property type="entry name" value="Globular_prot_asu/bsu"/>
</dbReference>
<dbReference type="InterPro" id="IPR037011">
    <property type="entry name" value="Phycoerythr-like_a_sf"/>
</dbReference>
<dbReference type="InterPro" id="IPR004228">
    <property type="entry name" value="Phycoerythr_a"/>
</dbReference>
<dbReference type="Pfam" id="PF02972">
    <property type="entry name" value="Phycoerythr_ab"/>
    <property type="match status" value="1"/>
</dbReference>
<dbReference type="SUPFAM" id="SSF56568">
    <property type="entry name" value="Non-globular alpha+beta subunits of globular proteins"/>
    <property type="match status" value="1"/>
</dbReference>
<geneLocation type="chloroplast" evidence="4"/>
<accession>U5T8W5</accession>
<protein>
    <recommendedName>
        <fullName evidence="3">Phycocyanin PC645 alpha-2 subunit</fullName>
        <shortName evidence="2">PC645A2</shortName>
    </recommendedName>
</protein>
<name>PHEA2_CHRS2</name>
<evidence type="ECO:0000269" key="1">
    <source>
    </source>
</evidence>
<evidence type="ECO:0000303" key="2">
    <source>
    </source>
</evidence>
<evidence type="ECO:0000305" key="3"/>
<evidence type="ECO:0000312" key="4">
    <source>
        <dbReference type="EMBL" id="AGY96992.1"/>
    </source>
</evidence>
<evidence type="ECO:0007744" key="5">
    <source>
        <dbReference type="PDB" id="4LMS"/>
    </source>
</evidence>
<evidence type="ECO:0007829" key="6">
    <source>
        <dbReference type="PDB" id="4LMS"/>
    </source>
</evidence>
<reference evidence="4 5" key="1">
    <citation type="journal article" date="2014" name="Proc. Natl. Acad. Sci. U.S.A.">
        <title>Single-residue insertion switches the quaternary structure and exciton states of cryptophyte light-harvesting proteins.</title>
        <authorList>
            <person name="Harrop S.J."/>
            <person name="Wilk K.E."/>
            <person name="Dinshaw R."/>
            <person name="Collini E."/>
            <person name="Mirkovic T."/>
            <person name="Teng C.Y."/>
            <person name="Oblinsky D.G."/>
            <person name="Green B.R."/>
            <person name="Hoef-Emden K."/>
            <person name="Hiller R.G."/>
            <person name="Scholes G.D."/>
            <person name="Curmi P.M."/>
        </authorList>
    </citation>
    <scope>NUCLEOTIDE SEQUENCE [MRNA]</scope>
    <scope>X-RAY CRYSTALLOGRAPHY (1.35 ANGSTROMS) OF 53-132 IN COMPLEX WITH MESOBILIVERDIN AND PHYCOCYANOBILIN</scope>
    <scope>SUBUNIT</scope>
</reference>
<comment type="function">
    <text evidence="3">Light-harvesting photosynthetic tetrapyrrole chromophore-protein from the phycobiliprotein complex.</text>
</comment>
<comment type="subunit">
    <text evidence="1">Heterotetramer of 2 different alpha chains and 2 identical beta chains which form 2 alpha-beta heterodimers within the heterotetramer.</text>
</comment>
<comment type="subcellular location">
    <subcellularLocation>
        <location evidence="3">Plastid</location>
        <location evidence="3">Chloroplast thylakoid membrane</location>
        <topology evidence="3">Peripheral membrane protein</topology>
        <orientation evidence="3">Lumenal side</orientation>
    </subcellularLocation>
</comment>
<comment type="PTM">
    <text evidence="1">Contains two phycocyanobilin chromophores and one mesobiliverdin chromophore with binding mediated by both the alpha and beta subunits.</text>
</comment>
<comment type="miscellaneous">
    <text evidence="3">The light-harvesting system in Cryptophytes contains phycobiliprotein complexes. Unusually they are composed of either phycoerythrin (CPE) or phycocyanin (CPC) but never allophycocyanin (APC), with only one type of biliprotein being present in any one species. Unlike cyanobacteria or red algae these proteins are not arranged into higher-order phycobilisome complexes, and they are found in the thylakoid lumen.</text>
</comment>
<comment type="similarity">
    <text evidence="3">Belongs to the phycoerythrin family.</text>
</comment>
<feature type="chain" id="PRO_5004664575" description="Phycocyanin PC645 alpha-2 subunit">
    <location>
        <begin position="1"/>
        <end position="122"/>
    </location>
</feature>
<feature type="binding site" evidence="1 5">
    <location>
        <position position="54"/>
    </location>
    <ligand>
        <name>(2R,3E)-phycocyanobilin</name>
        <dbReference type="ChEBI" id="CHEBI:85275"/>
        <label>1</label>
        <note>ligand shared with beta subunit</note>
    </ligand>
</feature>
<feature type="binding site" evidence="1 5">
    <location>
        <position position="68"/>
    </location>
    <ligand>
        <name>(2R,3E)-phycocyanobilin</name>
        <dbReference type="ChEBI" id="CHEBI:85275"/>
        <label>2</label>
        <note>ligand shared with beta subunit</note>
    </ligand>
</feature>
<feature type="binding site" description="covalent" evidence="1 5">
    <location>
        <position position="70"/>
    </location>
    <ligand>
        <name>mesobiliverdin</name>
        <dbReference type="ChEBI" id="CHEBI:189061"/>
        <note>ligand shared with beta subunit</note>
    </ligand>
</feature>
<feature type="binding site" evidence="1 5">
    <location>
        <position position="76"/>
    </location>
    <ligand>
        <name>mesobiliverdin</name>
        <dbReference type="ChEBI" id="CHEBI:189061"/>
        <note>ligand shared with beta subunit</note>
    </ligand>
</feature>
<feature type="binding site" evidence="1 5">
    <location>
        <position position="77"/>
    </location>
    <ligand>
        <name>mesobiliverdin</name>
        <dbReference type="ChEBI" id="CHEBI:189061"/>
        <note>ligand shared with beta subunit</note>
    </ligand>
</feature>
<feature type="binding site" evidence="1 5">
    <location>
        <position position="92"/>
    </location>
    <ligand>
        <name>mesobiliverdin</name>
        <dbReference type="ChEBI" id="CHEBI:189061"/>
        <note>ligand shared with beta subunit</note>
    </ligand>
</feature>
<feature type="strand" evidence="6">
    <location>
        <begin position="58"/>
        <end position="66"/>
    </location>
</feature>
<feature type="helix" evidence="6">
    <location>
        <begin position="86"/>
        <end position="89"/>
    </location>
</feature>
<feature type="strand" evidence="6">
    <location>
        <begin position="91"/>
        <end position="99"/>
    </location>
</feature>
<feature type="helix" evidence="6">
    <location>
        <begin position="104"/>
        <end position="115"/>
    </location>
</feature>
<organism>
    <name type="scientific">Chroomonas sp. (strain CCMP270)</name>
    <dbReference type="NCBI Taxonomy" id="354589"/>
    <lineage>
        <taxon>Eukaryota</taxon>
        <taxon>Cryptophyceae</taxon>
        <taxon>Pyrenomonadales</taxon>
        <taxon>Chroomonadaceae</taxon>
        <taxon>Chroomonas</taxon>
    </lineage>
</organism>
<sequence>MIAKTVAILALAGSAAAYAPTMSLSANRRELVQGAAAAAVVAPMLRPTGASAKDAQLRAPVVTIFDARGCKDHANKEYTDPKAGNAENDECCVKVQMTPIKVADDAAALVLKECLSELKGKK</sequence>
<proteinExistence type="evidence at protein level"/>